<reference key="1">
    <citation type="submission" date="2008-06" db="EMBL/GenBank/DDBJ databases">
        <title>Complete sequence of Chlorobaculum parvum NCIB 8327.</title>
        <authorList>
            <consortium name="US DOE Joint Genome Institute"/>
            <person name="Lucas S."/>
            <person name="Copeland A."/>
            <person name="Lapidus A."/>
            <person name="Glavina del Rio T."/>
            <person name="Dalin E."/>
            <person name="Tice H."/>
            <person name="Bruce D."/>
            <person name="Goodwin L."/>
            <person name="Pitluck S."/>
            <person name="Schmutz J."/>
            <person name="Larimer F."/>
            <person name="Land M."/>
            <person name="Hauser L."/>
            <person name="Kyrpides N."/>
            <person name="Mikhailova N."/>
            <person name="Zhao F."/>
            <person name="Li T."/>
            <person name="Liu Z."/>
            <person name="Overmann J."/>
            <person name="Bryant D.A."/>
            <person name="Richardson P."/>
        </authorList>
    </citation>
    <scope>NUCLEOTIDE SEQUENCE [LARGE SCALE GENOMIC DNA]</scope>
    <source>
        <strain>DSM 263 / NCIMB 8327</strain>
    </source>
</reference>
<keyword id="KW-0963">Cytoplasm</keyword>
<keyword id="KW-0210">Decarboxylase</keyword>
<keyword id="KW-0456">Lyase</keyword>
<keyword id="KW-0627">Porphyrin biosynthesis</keyword>
<accession>B3QL69</accession>
<dbReference type="EC" id="4.1.1.37" evidence="1"/>
<dbReference type="EMBL" id="CP001099">
    <property type="protein sequence ID" value="ACF12307.1"/>
    <property type="molecule type" value="Genomic_DNA"/>
</dbReference>
<dbReference type="RefSeq" id="WP_012503140.1">
    <property type="nucleotide sequence ID" value="NC_011027.1"/>
</dbReference>
<dbReference type="SMR" id="B3QL69"/>
<dbReference type="STRING" id="517417.Cpar_1915"/>
<dbReference type="KEGG" id="cpc:Cpar_1915"/>
<dbReference type="eggNOG" id="COG0407">
    <property type="taxonomic scope" value="Bacteria"/>
</dbReference>
<dbReference type="HOGENOM" id="CLU_040933_0_0_10"/>
<dbReference type="OrthoDB" id="9806656at2"/>
<dbReference type="UniPathway" id="UPA00251">
    <property type="reaction ID" value="UER00321"/>
</dbReference>
<dbReference type="Proteomes" id="UP000008811">
    <property type="component" value="Chromosome"/>
</dbReference>
<dbReference type="GO" id="GO:0005829">
    <property type="term" value="C:cytosol"/>
    <property type="evidence" value="ECO:0007669"/>
    <property type="project" value="TreeGrafter"/>
</dbReference>
<dbReference type="GO" id="GO:0004853">
    <property type="term" value="F:uroporphyrinogen decarboxylase activity"/>
    <property type="evidence" value="ECO:0007669"/>
    <property type="project" value="UniProtKB-UniRule"/>
</dbReference>
<dbReference type="GO" id="GO:0006782">
    <property type="term" value="P:protoporphyrinogen IX biosynthetic process"/>
    <property type="evidence" value="ECO:0007669"/>
    <property type="project" value="UniProtKB-UniRule"/>
</dbReference>
<dbReference type="CDD" id="cd00717">
    <property type="entry name" value="URO-D"/>
    <property type="match status" value="1"/>
</dbReference>
<dbReference type="FunFam" id="3.20.20.210:FF:000001">
    <property type="entry name" value="Uroporphyrinogen decarboxylase"/>
    <property type="match status" value="1"/>
</dbReference>
<dbReference type="Gene3D" id="3.20.20.210">
    <property type="match status" value="1"/>
</dbReference>
<dbReference type="HAMAP" id="MF_00218">
    <property type="entry name" value="URO_D"/>
    <property type="match status" value="1"/>
</dbReference>
<dbReference type="InterPro" id="IPR038071">
    <property type="entry name" value="UROD/MetE-like_sf"/>
</dbReference>
<dbReference type="InterPro" id="IPR006361">
    <property type="entry name" value="Uroporphyrinogen_deCO2ase_HemE"/>
</dbReference>
<dbReference type="InterPro" id="IPR000257">
    <property type="entry name" value="Uroporphyrinogen_deCOase"/>
</dbReference>
<dbReference type="NCBIfam" id="TIGR01464">
    <property type="entry name" value="hemE"/>
    <property type="match status" value="1"/>
</dbReference>
<dbReference type="PANTHER" id="PTHR21091">
    <property type="entry name" value="METHYLTETRAHYDROFOLATE:HOMOCYSTEINE METHYLTRANSFERASE RELATED"/>
    <property type="match status" value="1"/>
</dbReference>
<dbReference type="PANTHER" id="PTHR21091:SF169">
    <property type="entry name" value="UROPORPHYRINOGEN DECARBOXYLASE"/>
    <property type="match status" value="1"/>
</dbReference>
<dbReference type="Pfam" id="PF01208">
    <property type="entry name" value="URO-D"/>
    <property type="match status" value="1"/>
</dbReference>
<dbReference type="SUPFAM" id="SSF51726">
    <property type="entry name" value="UROD/MetE-like"/>
    <property type="match status" value="1"/>
</dbReference>
<dbReference type="PROSITE" id="PS00906">
    <property type="entry name" value="UROD_1"/>
    <property type="match status" value="1"/>
</dbReference>
<dbReference type="PROSITE" id="PS00907">
    <property type="entry name" value="UROD_2"/>
    <property type="match status" value="1"/>
</dbReference>
<gene>
    <name evidence="1" type="primary">hemE</name>
    <name type="ordered locus">Cpar_1915</name>
</gene>
<organism>
    <name type="scientific">Chlorobaculum parvum (strain DSM 263 / NCIMB 8327)</name>
    <name type="common">Chlorobium vibrioforme subsp. thiosulfatophilum</name>
    <dbReference type="NCBI Taxonomy" id="517417"/>
    <lineage>
        <taxon>Bacteria</taxon>
        <taxon>Pseudomonadati</taxon>
        <taxon>Chlorobiota</taxon>
        <taxon>Chlorobiia</taxon>
        <taxon>Chlorobiales</taxon>
        <taxon>Chlorobiaceae</taxon>
        <taxon>Chlorobaculum</taxon>
    </lineage>
</organism>
<evidence type="ECO:0000255" key="1">
    <source>
        <dbReference type="HAMAP-Rule" id="MF_00218"/>
    </source>
</evidence>
<protein>
    <recommendedName>
        <fullName evidence="1">Uroporphyrinogen decarboxylase</fullName>
        <shortName evidence="1">UPD</shortName>
        <shortName evidence="1">URO-D</shortName>
        <ecNumber evidence="1">4.1.1.37</ecNumber>
    </recommendedName>
</protein>
<comment type="function">
    <text evidence="1">Catalyzes the decarboxylation of four acetate groups of uroporphyrinogen-III to yield coproporphyrinogen-III.</text>
</comment>
<comment type="catalytic activity">
    <reaction evidence="1">
        <text>uroporphyrinogen III + 4 H(+) = coproporphyrinogen III + 4 CO2</text>
        <dbReference type="Rhea" id="RHEA:19865"/>
        <dbReference type="ChEBI" id="CHEBI:15378"/>
        <dbReference type="ChEBI" id="CHEBI:16526"/>
        <dbReference type="ChEBI" id="CHEBI:57308"/>
        <dbReference type="ChEBI" id="CHEBI:57309"/>
        <dbReference type="EC" id="4.1.1.37"/>
    </reaction>
</comment>
<comment type="pathway">
    <text evidence="1">Porphyrin-containing compound metabolism; protoporphyrin-IX biosynthesis; coproporphyrinogen-III from 5-aminolevulinate: step 4/4.</text>
</comment>
<comment type="subunit">
    <text evidence="1">Homodimer.</text>
</comment>
<comment type="subcellular location">
    <subcellularLocation>
        <location evidence="1">Cytoplasm</location>
    </subcellularLocation>
</comment>
<comment type="similarity">
    <text evidence="1">Belongs to the uroporphyrinogen decarboxylase family.</text>
</comment>
<sequence length="351" mass="39122">MLKNDLFLRALKRQSTPRTPIWVMRQAGRYLPEYRAVREKTDFLTLCKTPELACEVTIQPVDLMGVDAAIIFSDILVVNEAMGMDVQIIESKGIKLTPEIRSQADIDKLIDPDVEEKLGYVFDAIRLTKKELNDRVPLIGFSGAAWTLFTYAVEGGGSKNYANAKKMMYREPQMAHQLLQKITTCISNYLIKQVEAGADAIQIFDSWASALSEDDYREFALPYIKQNVAAVKAAYPEVPVIVFAKDMNTILSDVADTGADAVGLGWNIDIAKARKELNDRVCLQGNMDPTVLYGTPEKIKSEAAKILKQFGQHTDCSGHVFNLGHGILPDVDPANLKCLVEFVKEESAKYH</sequence>
<name>DCUP_CHLP8</name>
<proteinExistence type="inferred from homology"/>
<feature type="chain" id="PRO_1000099980" description="Uroporphyrinogen decarboxylase">
    <location>
        <begin position="1"/>
        <end position="351"/>
    </location>
</feature>
<feature type="binding site" evidence="1">
    <location>
        <begin position="25"/>
        <end position="29"/>
    </location>
    <ligand>
        <name>substrate</name>
    </ligand>
</feature>
<feature type="binding site" evidence="1">
    <location>
        <position position="74"/>
    </location>
    <ligand>
        <name>substrate</name>
    </ligand>
</feature>
<feature type="binding site" evidence="1">
    <location>
        <position position="151"/>
    </location>
    <ligand>
        <name>substrate</name>
    </ligand>
</feature>
<feature type="binding site" evidence="1">
    <location>
        <position position="206"/>
    </location>
    <ligand>
        <name>substrate</name>
    </ligand>
</feature>
<feature type="binding site" evidence="1">
    <location>
        <position position="325"/>
    </location>
    <ligand>
        <name>substrate</name>
    </ligand>
</feature>
<feature type="site" description="Transition state stabilizer" evidence="1">
    <location>
        <position position="74"/>
    </location>
</feature>